<keyword id="KW-0255">Endonuclease</keyword>
<keyword id="KW-0378">Hydrolase</keyword>
<keyword id="KW-0540">Nuclease</keyword>
<keyword id="KW-1185">Reference proteome</keyword>
<keyword id="KW-0678">Repressor</keyword>
<keyword id="KW-0694">RNA-binding</keyword>
<keyword id="KW-1277">Toxin-antitoxin system</keyword>
<keyword id="KW-0804">Transcription</keyword>
<keyword id="KW-0805">Transcription regulation</keyword>
<organism>
    <name type="scientific">Shigella flexneri</name>
    <dbReference type="NCBI Taxonomy" id="623"/>
    <lineage>
        <taxon>Bacteria</taxon>
        <taxon>Pseudomonadati</taxon>
        <taxon>Pseudomonadota</taxon>
        <taxon>Gammaproteobacteria</taxon>
        <taxon>Enterobacterales</taxon>
        <taxon>Enterobacteriaceae</taxon>
        <taxon>Shigella</taxon>
    </lineage>
</organism>
<accession>P69349</accession>
<accession>P56605</accession>
<name>YOEB_SHIFL</name>
<sequence length="84" mass="10216">MKLIWSEESWDDYLYWQETDKRIVKKINELIKDTRRTPFEGKGKPEPLKHNLSGFWSRRITEEHRLVYAVTDDSLLIAACRYHY</sequence>
<gene>
    <name type="primary">yoeB</name>
    <name type="synonym">relE2</name>
    <name type="ordered locus">SF2076</name>
    <name type="ordered locus">S2198.1</name>
</gene>
<proteinExistence type="inferred from homology"/>
<evidence type="ECO:0000250" key="1"/>
<evidence type="ECO:0000305" key="2"/>
<dbReference type="EC" id="3.1.-.-"/>
<dbReference type="EMBL" id="AE005674">
    <property type="protein sequence ID" value="AAN43616.1"/>
    <property type="molecule type" value="Genomic_DNA"/>
</dbReference>
<dbReference type="EMBL" id="AE014073">
    <property type="status" value="NOT_ANNOTATED_CDS"/>
    <property type="molecule type" value="Genomic_DNA"/>
</dbReference>
<dbReference type="RefSeq" id="NP_707909.1">
    <property type="nucleotide sequence ID" value="NC_004337.2"/>
</dbReference>
<dbReference type="RefSeq" id="WP_000767829.1">
    <property type="nucleotide sequence ID" value="NZ_WPGW01000149.1"/>
</dbReference>
<dbReference type="SMR" id="P69349"/>
<dbReference type="STRING" id="198214.SF2076"/>
<dbReference type="PaxDb" id="198214-SF2076"/>
<dbReference type="GeneID" id="1025103"/>
<dbReference type="GeneID" id="93775157"/>
<dbReference type="KEGG" id="sfl:SF2076"/>
<dbReference type="PATRIC" id="fig|198214.7.peg.2486"/>
<dbReference type="HOGENOM" id="CLU_169492_2_2_6"/>
<dbReference type="Proteomes" id="UP000001006">
    <property type="component" value="Chromosome"/>
</dbReference>
<dbReference type="Proteomes" id="UP000002673">
    <property type="component" value="Chromosome"/>
</dbReference>
<dbReference type="GO" id="GO:0004519">
    <property type="term" value="F:endonuclease activity"/>
    <property type="evidence" value="ECO:0007669"/>
    <property type="project" value="UniProtKB-KW"/>
</dbReference>
<dbReference type="GO" id="GO:0003723">
    <property type="term" value="F:RNA binding"/>
    <property type="evidence" value="ECO:0007669"/>
    <property type="project" value="UniProtKB-KW"/>
</dbReference>
<dbReference type="GO" id="GO:0098795">
    <property type="term" value="P:global gene silencing by mRNA cleavage"/>
    <property type="evidence" value="ECO:0007669"/>
    <property type="project" value="TreeGrafter"/>
</dbReference>
<dbReference type="GO" id="GO:0006401">
    <property type="term" value="P:RNA catabolic process"/>
    <property type="evidence" value="ECO:0007669"/>
    <property type="project" value="InterPro"/>
</dbReference>
<dbReference type="FunFam" id="3.30.2310.20:FF:000001">
    <property type="entry name" value="Addiction module toxin, Txe/YoeB family"/>
    <property type="match status" value="1"/>
</dbReference>
<dbReference type="Gene3D" id="3.30.2310.20">
    <property type="entry name" value="RelE-like"/>
    <property type="match status" value="1"/>
</dbReference>
<dbReference type="InterPro" id="IPR035093">
    <property type="entry name" value="RelE/ParE_toxin_dom_sf"/>
</dbReference>
<dbReference type="InterPro" id="IPR009614">
    <property type="entry name" value="YoeB_toxin"/>
</dbReference>
<dbReference type="NCBIfam" id="TIGR02116">
    <property type="entry name" value="toxin_Txe_YoeB"/>
    <property type="match status" value="1"/>
</dbReference>
<dbReference type="PANTHER" id="PTHR38039">
    <property type="entry name" value="TOXIN YOEB"/>
    <property type="match status" value="1"/>
</dbReference>
<dbReference type="PANTHER" id="PTHR38039:SF1">
    <property type="entry name" value="TOXIN YOEB"/>
    <property type="match status" value="1"/>
</dbReference>
<dbReference type="Pfam" id="PF06769">
    <property type="entry name" value="YoeB_toxin"/>
    <property type="match status" value="1"/>
</dbReference>
<dbReference type="SUPFAM" id="SSF143011">
    <property type="entry name" value="RelE-like"/>
    <property type="match status" value="1"/>
</dbReference>
<reference key="1">
    <citation type="journal article" date="2002" name="Nucleic Acids Res.">
        <title>Genome sequence of Shigella flexneri 2a: insights into pathogenicity through comparison with genomes of Escherichia coli K12 and O157.</title>
        <authorList>
            <person name="Jin Q."/>
            <person name="Yuan Z."/>
            <person name="Xu J."/>
            <person name="Wang Y."/>
            <person name="Shen Y."/>
            <person name="Lu W."/>
            <person name="Wang J."/>
            <person name="Liu H."/>
            <person name="Yang J."/>
            <person name="Yang F."/>
            <person name="Zhang X."/>
            <person name="Zhang J."/>
            <person name="Yang G."/>
            <person name="Wu H."/>
            <person name="Qu D."/>
            <person name="Dong J."/>
            <person name="Sun L."/>
            <person name="Xue Y."/>
            <person name="Zhao A."/>
            <person name="Gao Y."/>
            <person name="Zhu J."/>
            <person name="Kan B."/>
            <person name="Ding K."/>
            <person name="Chen S."/>
            <person name="Cheng H."/>
            <person name="Yao Z."/>
            <person name="He B."/>
            <person name="Chen R."/>
            <person name="Ma D."/>
            <person name="Qiang B."/>
            <person name="Wen Y."/>
            <person name="Hou Y."/>
            <person name="Yu J."/>
        </authorList>
    </citation>
    <scope>NUCLEOTIDE SEQUENCE [LARGE SCALE GENOMIC DNA]</scope>
    <source>
        <strain>301 / Serotype 2a</strain>
    </source>
</reference>
<reference key="2">
    <citation type="journal article" date="2003" name="Infect. Immun.">
        <title>Complete genome sequence and comparative genomics of Shigella flexneri serotype 2a strain 2457T.</title>
        <authorList>
            <person name="Wei J."/>
            <person name="Goldberg M.B."/>
            <person name="Burland V."/>
            <person name="Venkatesan M.M."/>
            <person name="Deng W."/>
            <person name="Fournier G."/>
            <person name="Mayhew G.F."/>
            <person name="Plunkett G. III"/>
            <person name="Rose D.J."/>
            <person name="Darling A."/>
            <person name="Mau B."/>
            <person name="Perna N.T."/>
            <person name="Payne S.M."/>
            <person name="Runyen-Janecky L.J."/>
            <person name="Zhou S."/>
            <person name="Schwartz D.C."/>
            <person name="Blattner F.R."/>
        </authorList>
    </citation>
    <scope>NUCLEOTIDE SEQUENCE [LARGE SCALE GENOMIC DNA]</scope>
    <source>
        <strain>ATCC 700930 / 2457T / Serotype 2a</strain>
    </source>
</reference>
<reference key="3">
    <citation type="journal article" date="2005" name="Nucleic Acids Res.">
        <title>Toxin-antitoxin loci are highly abundant in free-living but lost from host-associated prokaryotes.</title>
        <authorList>
            <person name="Pandey D.P."/>
            <person name="Gerdes K."/>
        </authorList>
    </citation>
    <scope>POSSIBLE FUNCTION</scope>
    <source>
        <strain>301 / Serotype 2a</strain>
        <strain>ATCC 700930 / 2457T / Serotype 2a</strain>
    </source>
</reference>
<feature type="chain" id="PRO_0000216211" description="Toxin YoeB">
    <location>
        <begin position="1"/>
        <end position="84"/>
    </location>
</feature>
<feature type="active site" description="Proton acceptor" evidence="1">
    <location>
        <position position="46"/>
    </location>
</feature>
<feature type="active site" description="Proton donor" evidence="1">
    <location>
        <position position="83"/>
    </location>
</feature>
<protein>
    <recommendedName>
        <fullName>Toxin YoeB</fullName>
        <ecNumber>3.1.-.-</ecNumber>
    </recommendedName>
    <alternativeName>
        <fullName>Putative endoribonuclease YoeB</fullName>
    </alternativeName>
    <alternativeName>
        <fullName>Putative mRNA interferase Yoeb</fullName>
    </alternativeName>
    <alternativeName>
        <fullName>Toxin RelE2</fullName>
    </alternativeName>
</protein>
<comment type="function">
    <text evidence="1">Toxic component of a type II toxin-antitoxin (TA) system. It has been proposed to be an mRNA interferase but also an inhibitor of translation initiation. Has an in vitro RNase activity and preferentially cleaves at the 3'-end of purine ribonucleotides. YefM binds to the promoter region of the yefM-yeoB operon to repress transcription, YeoB acts as a corepressor (By similarity).</text>
</comment>
<comment type="subunit">
    <text evidence="1">Forms a complex with antitoxin YefM, in which the toxin is inactive.</text>
</comment>
<comment type="similarity">
    <text evidence="2">Belongs to the YoeB family.</text>
</comment>